<protein>
    <recommendedName>
        <fullName evidence="1">Sec-independent protein translocase protein TatA</fullName>
    </recommendedName>
</protein>
<evidence type="ECO:0000255" key="1">
    <source>
        <dbReference type="HAMAP-Rule" id="MF_00236"/>
    </source>
</evidence>
<evidence type="ECO:0000256" key="2">
    <source>
        <dbReference type="SAM" id="MobiDB-lite"/>
    </source>
</evidence>
<gene>
    <name evidence="1" type="primary">tatA</name>
    <name type="ordered locus">Bcep18194_A3534</name>
</gene>
<sequence>MGGLSIWHWLIVLLIVALVFGTKKLRNIGNDLGSAVKGFKDGMKEGEAPADAQQLPRSGSVDVNAKETTRSDSNKA</sequence>
<accession>Q39K80</accession>
<keyword id="KW-0997">Cell inner membrane</keyword>
<keyword id="KW-1003">Cell membrane</keyword>
<keyword id="KW-0472">Membrane</keyword>
<keyword id="KW-0653">Protein transport</keyword>
<keyword id="KW-0811">Translocation</keyword>
<keyword id="KW-0812">Transmembrane</keyword>
<keyword id="KW-1133">Transmembrane helix</keyword>
<keyword id="KW-0813">Transport</keyword>
<name>TATA_BURL3</name>
<organism>
    <name type="scientific">Burkholderia lata (strain ATCC 17760 / DSM 23089 / LMG 22485 / NCIMB 9086 / R18194 / 383)</name>
    <dbReference type="NCBI Taxonomy" id="482957"/>
    <lineage>
        <taxon>Bacteria</taxon>
        <taxon>Pseudomonadati</taxon>
        <taxon>Pseudomonadota</taxon>
        <taxon>Betaproteobacteria</taxon>
        <taxon>Burkholderiales</taxon>
        <taxon>Burkholderiaceae</taxon>
        <taxon>Burkholderia</taxon>
        <taxon>Burkholderia cepacia complex</taxon>
    </lineage>
</organism>
<proteinExistence type="inferred from homology"/>
<comment type="function">
    <text evidence="1">Part of the twin-arginine translocation (Tat) system that transports large folded proteins containing a characteristic twin-arginine motif in their signal peptide across membranes. TatA could form the protein-conducting channel of the Tat system.</text>
</comment>
<comment type="subunit">
    <text evidence="1">The Tat system comprises two distinct complexes: a TatABC complex, containing multiple copies of TatA, TatB and TatC subunits, and a separate TatA complex, containing only TatA subunits. Substrates initially bind to the TatABC complex, which probably triggers association of the separate TatA complex to form the active translocon.</text>
</comment>
<comment type="subcellular location">
    <subcellularLocation>
        <location evidence="1">Cell inner membrane</location>
        <topology evidence="1">Single-pass membrane protein</topology>
    </subcellularLocation>
</comment>
<comment type="similarity">
    <text evidence="1">Belongs to the TatA/E family.</text>
</comment>
<reference key="1">
    <citation type="submission" date="2005-10" db="EMBL/GenBank/DDBJ databases">
        <title>Complete sequence of chromosome 1 of Burkholderia sp. 383.</title>
        <authorList>
            <consortium name="US DOE Joint Genome Institute"/>
            <person name="Copeland A."/>
            <person name="Lucas S."/>
            <person name="Lapidus A."/>
            <person name="Barry K."/>
            <person name="Detter J.C."/>
            <person name="Glavina T."/>
            <person name="Hammon N."/>
            <person name="Israni S."/>
            <person name="Pitluck S."/>
            <person name="Chain P."/>
            <person name="Malfatti S."/>
            <person name="Shin M."/>
            <person name="Vergez L."/>
            <person name="Schmutz J."/>
            <person name="Larimer F."/>
            <person name="Land M."/>
            <person name="Kyrpides N."/>
            <person name="Lykidis A."/>
            <person name="Richardson P."/>
        </authorList>
    </citation>
    <scope>NUCLEOTIDE SEQUENCE [LARGE SCALE GENOMIC DNA]</scope>
    <source>
        <strain>ATCC 17760 / DSM 23089 / LMG 22485 / NCIMB 9086 / R18194 / 383</strain>
    </source>
</reference>
<feature type="chain" id="PRO_1000044372" description="Sec-independent protein translocase protein TatA">
    <location>
        <begin position="1"/>
        <end position="76"/>
    </location>
</feature>
<feature type="transmembrane region" description="Helical" evidence="1">
    <location>
        <begin position="1"/>
        <end position="21"/>
    </location>
</feature>
<feature type="region of interest" description="Disordered" evidence="2">
    <location>
        <begin position="43"/>
        <end position="76"/>
    </location>
</feature>
<feature type="compositionally biased region" description="Basic and acidic residues" evidence="2">
    <location>
        <begin position="64"/>
        <end position="76"/>
    </location>
</feature>
<dbReference type="EMBL" id="CP000151">
    <property type="protein sequence ID" value="ABB07136.1"/>
    <property type="molecule type" value="Genomic_DNA"/>
</dbReference>
<dbReference type="RefSeq" id="WP_011350736.1">
    <property type="nucleotide sequence ID" value="NZ_WNDV01000034.1"/>
</dbReference>
<dbReference type="SMR" id="Q39K80"/>
<dbReference type="GeneID" id="45093449"/>
<dbReference type="KEGG" id="bur:Bcep18194_A3534"/>
<dbReference type="PATRIC" id="fig|482957.22.peg.379"/>
<dbReference type="HOGENOM" id="CLU_086034_5_3_4"/>
<dbReference type="Proteomes" id="UP000002705">
    <property type="component" value="Chromosome 1"/>
</dbReference>
<dbReference type="GO" id="GO:0033281">
    <property type="term" value="C:TAT protein transport complex"/>
    <property type="evidence" value="ECO:0007669"/>
    <property type="project" value="UniProtKB-UniRule"/>
</dbReference>
<dbReference type="GO" id="GO:0008320">
    <property type="term" value="F:protein transmembrane transporter activity"/>
    <property type="evidence" value="ECO:0007669"/>
    <property type="project" value="UniProtKB-UniRule"/>
</dbReference>
<dbReference type="GO" id="GO:0043953">
    <property type="term" value="P:protein transport by the Tat complex"/>
    <property type="evidence" value="ECO:0007669"/>
    <property type="project" value="UniProtKB-UniRule"/>
</dbReference>
<dbReference type="Gene3D" id="1.20.5.3310">
    <property type="match status" value="1"/>
</dbReference>
<dbReference type="HAMAP" id="MF_00236">
    <property type="entry name" value="TatA_E"/>
    <property type="match status" value="1"/>
</dbReference>
<dbReference type="InterPro" id="IPR003369">
    <property type="entry name" value="TatA/B/E"/>
</dbReference>
<dbReference type="InterPro" id="IPR006312">
    <property type="entry name" value="TatA/E"/>
</dbReference>
<dbReference type="NCBIfam" id="NF002813">
    <property type="entry name" value="PRK02958.1"/>
    <property type="match status" value="1"/>
</dbReference>
<dbReference type="NCBIfam" id="TIGR01411">
    <property type="entry name" value="tatAE"/>
    <property type="match status" value="1"/>
</dbReference>
<dbReference type="PANTHER" id="PTHR42982">
    <property type="entry name" value="SEC-INDEPENDENT PROTEIN TRANSLOCASE PROTEIN TATA"/>
    <property type="match status" value="1"/>
</dbReference>
<dbReference type="PANTHER" id="PTHR42982:SF1">
    <property type="entry name" value="SEC-INDEPENDENT PROTEIN TRANSLOCASE PROTEIN TATA"/>
    <property type="match status" value="1"/>
</dbReference>
<dbReference type="Pfam" id="PF02416">
    <property type="entry name" value="TatA_B_E"/>
    <property type="match status" value="1"/>
</dbReference>